<accession>Q12SU3</accession>
<comment type="function">
    <text evidence="1">This is one of the proteins that bind and probably mediate the attachment of the 5S RNA into the large ribosomal subunit, where it forms part of the central protuberance.</text>
</comment>
<comment type="subunit">
    <text evidence="1">Part of the 50S ribosomal subunit; part of the 5S rRNA/L5/L18/L25 subcomplex. Contacts the 5S and 23S rRNAs.</text>
</comment>
<comment type="similarity">
    <text evidence="1">Belongs to the universal ribosomal protein uL18 family.</text>
</comment>
<evidence type="ECO:0000255" key="1">
    <source>
        <dbReference type="HAMAP-Rule" id="MF_01337"/>
    </source>
</evidence>
<evidence type="ECO:0000305" key="2"/>
<sequence>MDKKTSRLRRALRARKKIQELGVNRLVVHRTPRHIYAQVISPEAQVLAAASTVEKTVKELLKSTGNVDAAKAVGKIVAERAIEKGVAIVAFDRSGFKYHGRVAALADAAREAGLKF</sequence>
<gene>
    <name evidence="1" type="primary">rplR</name>
    <name type="ordered locus">Sden_0186</name>
</gene>
<dbReference type="EMBL" id="CP000302">
    <property type="protein sequence ID" value="ABE53483.1"/>
    <property type="molecule type" value="Genomic_DNA"/>
</dbReference>
<dbReference type="RefSeq" id="WP_011494650.1">
    <property type="nucleotide sequence ID" value="NC_007954.1"/>
</dbReference>
<dbReference type="SMR" id="Q12SU3"/>
<dbReference type="STRING" id="318161.Sden_0186"/>
<dbReference type="KEGG" id="sdn:Sden_0186"/>
<dbReference type="eggNOG" id="COG0256">
    <property type="taxonomic scope" value="Bacteria"/>
</dbReference>
<dbReference type="HOGENOM" id="CLU_098841_0_1_6"/>
<dbReference type="OrthoDB" id="9810939at2"/>
<dbReference type="Proteomes" id="UP000001982">
    <property type="component" value="Chromosome"/>
</dbReference>
<dbReference type="GO" id="GO:0022625">
    <property type="term" value="C:cytosolic large ribosomal subunit"/>
    <property type="evidence" value="ECO:0007669"/>
    <property type="project" value="TreeGrafter"/>
</dbReference>
<dbReference type="GO" id="GO:0008097">
    <property type="term" value="F:5S rRNA binding"/>
    <property type="evidence" value="ECO:0007669"/>
    <property type="project" value="TreeGrafter"/>
</dbReference>
<dbReference type="GO" id="GO:0003735">
    <property type="term" value="F:structural constituent of ribosome"/>
    <property type="evidence" value="ECO:0007669"/>
    <property type="project" value="InterPro"/>
</dbReference>
<dbReference type="GO" id="GO:0006412">
    <property type="term" value="P:translation"/>
    <property type="evidence" value="ECO:0007669"/>
    <property type="project" value="UniProtKB-UniRule"/>
</dbReference>
<dbReference type="CDD" id="cd00432">
    <property type="entry name" value="Ribosomal_L18_L5e"/>
    <property type="match status" value="1"/>
</dbReference>
<dbReference type="FunFam" id="3.30.420.100:FF:000001">
    <property type="entry name" value="50S ribosomal protein L18"/>
    <property type="match status" value="1"/>
</dbReference>
<dbReference type="Gene3D" id="3.30.420.100">
    <property type="match status" value="1"/>
</dbReference>
<dbReference type="HAMAP" id="MF_01337_B">
    <property type="entry name" value="Ribosomal_uL18_B"/>
    <property type="match status" value="1"/>
</dbReference>
<dbReference type="InterPro" id="IPR004389">
    <property type="entry name" value="Ribosomal_uL18_bac-type"/>
</dbReference>
<dbReference type="InterPro" id="IPR005484">
    <property type="entry name" value="Ribosomal_uL18_bac/euk"/>
</dbReference>
<dbReference type="NCBIfam" id="TIGR00060">
    <property type="entry name" value="L18_bact"/>
    <property type="match status" value="1"/>
</dbReference>
<dbReference type="PANTHER" id="PTHR12899">
    <property type="entry name" value="39S RIBOSOMAL PROTEIN L18, MITOCHONDRIAL"/>
    <property type="match status" value="1"/>
</dbReference>
<dbReference type="PANTHER" id="PTHR12899:SF3">
    <property type="entry name" value="LARGE RIBOSOMAL SUBUNIT PROTEIN UL18M"/>
    <property type="match status" value="1"/>
</dbReference>
<dbReference type="Pfam" id="PF00861">
    <property type="entry name" value="Ribosomal_L18p"/>
    <property type="match status" value="1"/>
</dbReference>
<dbReference type="SUPFAM" id="SSF53137">
    <property type="entry name" value="Translational machinery components"/>
    <property type="match status" value="1"/>
</dbReference>
<protein>
    <recommendedName>
        <fullName evidence="1">Large ribosomal subunit protein uL18</fullName>
    </recommendedName>
    <alternativeName>
        <fullName evidence="2">50S ribosomal protein L18</fullName>
    </alternativeName>
</protein>
<proteinExistence type="inferred from homology"/>
<name>RL18_SHEDO</name>
<reference key="1">
    <citation type="submission" date="2006-03" db="EMBL/GenBank/DDBJ databases">
        <title>Complete sequence of Shewanella denitrificans OS217.</title>
        <authorList>
            <consortium name="US DOE Joint Genome Institute"/>
            <person name="Copeland A."/>
            <person name="Lucas S."/>
            <person name="Lapidus A."/>
            <person name="Barry K."/>
            <person name="Detter J.C."/>
            <person name="Glavina del Rio T."/>
            <person name="Hammon N."/>
            <person name="Israni S."/>
            <person name="Dalin E."/>
            <person name="Tice H."/>
            <person name="Pitluck S."/>
            <person name="Brettin T."/>
            <person name="Bruce D."/>
            <person name="Han C."/>
            <person name="Tapia R."/>
            <person name="Gilna P."/>
            <person name="Kiss H."/>
            <person name="Schmutz J."/>
            <person name="Larimer F."/>
            <person name="Land M."/>
            <person name="Hauser L."/>
            <person name="Kyrpides N."/>
            <person name="Lykidis A."/>
            <person name="Richardson P."/>
        </authorList>
    </citation>
    <scope>NUCLEOTIDE SEQUENCE [LARGE SCALE GENOMIC DNA]</scope>
    <source>
        <strain>OS217 / ATCC BAA-1090 / DSM 15013</strain>
    </source>
</reference>
<organism>
    <name type="scientific">Shewanella denitrificans (strain OS217 / ATCC BAA-1090 / DSM 15013)</name>
    <dbReference type="NCBI Taxonomy" id="318161"/>
    <lineage>
        <taxon>Bacteria</taxon>
        <taxon>Pseudomonadati</taxon>
        <taxon>Pseudomonadota</taxon>
        <taxon>Gammaproteobacteria</taxon>
        <taxon>Alteromonadales</taxon>
        <taxon>Shewanellaceae</taxon>
        <taxon>Shewanella</taxon>
    </lineage>
</organism>
<feature type="chain" id="PRO_1000053106" description="Large ribosomal subunit protein uL18">
    <location>
        <begin position="1"/>
        <end position="116"/>
    </location>
</feature>
<keyword id="KW-1185">Reference proteome</keyword>
<keyword id="KW-0687">Ribonucleoprotein</keyword>
<keyword id="KW-0689">Ribosomal protein</keyword>
<keyword id="KW-0694">RNA-binding</keyword>
<keyword id="KW-0699">rRNA-binding</keyword>